<sequence>MALKTFNPTTPGQRQLVMVDRSALYKGKPVKALTEGKHSSGGRNNTGRITVRFRGGGHKQTLRIVDFKRDKVDAPATVERLEYDPNRTAFIALVKYEDGTQAYILAPQRLAVGDSVVAGNYVDVKPGNVMPLGNMPVGTIIHNIEVKIGKGGQLARSAGTYAQLVGRDQDYVIIRLNSGEQRLVHGRCRGTIGAVSNPDHMNTSIGKAGRNRWLGRKPHNRGVSMNPIDHPHGGGEGRTSGGRHPVTPWGKPTKGKKTRSNKSTNKFILLSRHKRKK</sequence>
<comment type="function">
    <text evidence="1">One of the primary rRNA binding proteins. Required for association of the 30S and 50S subunits to form the 70S ribosome, for tRNA binding and peptide bond formation. It has been suggested to have peptidyltransferase activity; this is somewhat controversial. Makes several contacts with the 16S rRNA in the 70S ribosome.</text>
</comment>
<comment type="subunit">
    <text evidence="1">Part of the 50S ribosomal subunit. Forms a bridge to the 30S subunit in the 70S ribosome.</text>
</comment>
<comment type="similarity">
    <text evidence="1">Belongs to the universal ribosomal protein uL2 family.</text>
</comment>
<proteinExistence type="inferred from homology"/>
<feature type="chain" id="PRO_0000129536" description="Large ribosomal subunit protein uL2">
    <location>
        <begin position="1"/>
        <end position="277"/>
    </location>
</feature>
<feature type="region of interest" description="Disordered" evidence="2">
    <location>
        <begin position="199"/>
        <end position="277"/>
    </location>
</feature>
<feature type="compositionally biased region" description="Basic residues" evidence="2">
    <location>
        <begin position="209"/>
        <end position="220"/>
    </location>
</feature>
<organism>
    <name type="scientific">Bradyrhizobium diazoefficiens (strain JCM 10833 / BCRC 13528 / IAM 13628 / NBRC 14792 / USDA 110)</name>
    <dbReference type="NCBI Taxonomy" id="224911"/>
    <lineage>
        <taxon>Bacteria</taxon>
        <taxon>Pseudomonadati</taxon>
        <taxon>Pseudomonadota</taxon>
        <taxon>Alphaproteobacteria</taxon>
        <taxon>Hyphomicrobiales</taxon>
        <taxon>Nitrobacteraceae</taxon>
        <taxon>Bradyrhizobium</taxon>
    </lineage>
</organism>
<evidence type="ECO:0000255" key="1">
    <source>
        <dbReference type="HAMAP-Rule" id="MF_01320"/>
    </source>
</evidence>
<evidence type="ECO:0000256" key="2">
    <source>
        <dbReference type="SAM" id="MobiDB-lite"/>
    </source>
</evidence>
<evidence type="ECO:0000305" key="3"/>
<keyword id="KW-1185">Reference proteome</keyword>
<keyword id="KW-0687">Ribonucleoprotein</keyword>
<keyword id="KW-0689">Ribosomal protein</keyword>
<keyword id="KW-0694">RNA-binding</keyword>
<keyword id="KW-0699">rRNA-binding</keyword>
<gene>
    <name evidence="1" type="primary">rplB</name>
    <name type="ordered locus">bll5397</name>
</gene>
<name>RL2_BRADU</name>
<protein>
    <recommendedName>
        <fullName evidence="1">Large ribosomal subunit protein uL2</fullName>
    </recommendedName>
    <alternativeName>
        <fullName evidence="3">50S ribosomal protein L2</fullName>
    </alternativeName>
</protein>
<accession>Q89J87</accession>
<reference key="1">
    <citation type="journal article" date="2002" name="DNA Res.">
        <title>Complete genomic sequence of nitrogen-fixing symbiotic bacterium Bradyrhizobium japonicum USDA110.</title>
        <authorList>
            <person name="Kaneko T."/>
            <person name="Nakamura Y."/>
            <person name="Sato S."/>
            <person name="Minamisawa K."/>
            <person name="Uchiumi T."/>
            <person name="Sasamoto S."/>
            <person name="Watanabe A."/>
            <person name="Idesawa K."/>
            <person name="Iriguchi M."/>
            <person name="Kawashima K."/>
            <person name="Kohara M."/>
            <person name="Matsumoto M."/>
            <person name="Shimpo S."/>
            <person name="Tsuruoka H."/>
            <person name="Wada T."/>
            <person name="Yamada M."/>
            <person name="Tabata S."/>
        </authorList>
    </citation>
    <scope>NUCLEOTIDE SEQUENCE [LARGE SCALE GENOMIC DNA]</scope>
    <source>
        <strain>JCM 10833 / BCRC 13528 / IAM 13628 / NBRC 14792 / USDA 110</strain>
    </source>
</reference>
<dbReference type="EMBL" id="BA000040">
    <property type="protein sequence ID" value="BAC50662.1"/>
    <property type="molecule type" value="Genomic_DNA"/>
</dbReference>
<dbReference type="RefSeq" id="NP_772037.1">
    <property type="nucleotide sequence ID" value="NC_004463.1"/>
</dbReference>
<dbReference type="RefSeq" id="WP_011088148.1">
    <property type="nucleotide sequence ID" value="NZ_CP011360.1"/>
</dbReference>
<dbReference type="SMR" id="Q89J87"/>
<dbReference type="FunCoup" id="Q89J87">
    <property type="interactions" value="1028"/>
</dbReference>
<dbReference type="STRING" id="224911.AAV28_24395"/>
<dbReference type="EnsemblBacteria" id="BAC50662">
    <property type="protein sequence ID" value="BAC50662"/>
    <property type="gene ID" value="BAC50662"/>
</dbReference>
<dbReference type="GeneID" id="46492395"/>
<dbReference type="KEGG" id="bja:bll5397"/>
<dbReference type="PATRIC" id="fig|224911.44.peg.5296"/>
<dbReference type="eggNOG" id="COG0090">
    <property type="taxonomic scope" value="Bacteria"/>
</dbReference>
<dbReference type="HOGENOM" id="CLU_036235_2_1_5"/>
<dbReference type="InParanoid" id="Q89J87"/>
<dbReference type="OrthoDB" id="9778722at2"/>
<dbReference type="PhylomeDB" id="Q89J87"/>
<dbReference type="Proteomes" id="UP000002526">
    <property type="component" value="Chromosome"/>
</dbReference>
<dbReference type="GO" id="GO:0022625">
    <property type="term" value="C:cytosolic large ribosomal subunit"/>
    <property type="evidence" value="ECO:0000318"/>
    <property type="project" value="GO_Central"/>
</dbReference>
<dbReference type="GO" id="GO:0003723">
    <property type="term" value="F:RNA binding"/>
    <property type="evidence" value="ECO:0000318"/>
    <property type="project" value="GO_Central"/>
</dbReference>
<dbReference type="GO" id="GO:0019843">
    <property type="term" value="F:rRNA binding"/>
    <property type="evidence" value="ECO:0007669"/>
    <property type="project" value="UniProtKB-UniRule"/>
</dbReference>
<dbReference type="GO" id="GO:0003735">
    <property type="term" value="F:structural constituent of ribosome"/>
    <property type="evidence" value="ECO:0000318"/>
    <property type="project" value="GO_Central"/>
</dbReference>
<dbReference type="GO" id="GO:0016740">
    <property type="term" value="F:transferase activity"/>
    <property type="evidence" value="ECO:0007669"/>
    <property type="project" value="InterPro"/>
</dbReference>
<dbReference type="GO" id="GO:0002181">
    <property type="term" value="P:cytoplasmic translation"/>
    <property type="evidence" value="ECO:0000318"/>
    <property type="project" value="GO_Central"/>
</dbReference>
<dbReference type="FunFam" id="2.30.30.30:FF:000055">
    <property type="entry name" value="50S ribosomal protein L2"/>
    <property type="match status" value="1"/>
</dbReference>
<dbReference type="FunFam" id="2.40.50.140:FF:000003">
    <property type="entry name" value="50S ribosomal protein L2"/>
    <property type="match status" value="1"/>
</dbReference>
<dbReference type="FunFam" id="4.10.950.10:FF:000001">
    <property type="entry name" value="50S ribosomal protein L2"/>
    <property type="match status" value="1"/>
</dbReference>
<dbReference type="Gene3D" id="2.30.30.30">
    <property type="match status" value="1"/>
</dbReference>
<dbReference type="Gene3D" id="2.40.50.140">
    <property type="entry name" value="Nucleic acid-binding proteins"/>
    <property type="match status" value="1"/>
</dbReference>
<dbReference type="Gene3D" id="4.10.950.10">
    <property type="entry name" value="Ribosomal protein L2, domain 3"/>
    <property type="match status" value="1"/>
</dbReference>
<dbReference type="HAMAP" id="MF_01320_B">
    <property type="entry name" value="Ribosomal_uL2_B"/>
    <property type="match status" value="1"/>
</dbReference>
<dbReference type="InterPro" id="IPR012340">
    <property type="entry name" value="NA-bd_OB-fold"/>
</dbReference>
<dbReference type="InterPro" id="IPR014722">
    <property type="entry name" value="Rib_uL2_dom2"/>
</dbReference>
<dbReference type="InterPro" id="IPR002171">
    <property type="entry name" value="Ribosomal_uL2"/>
</dbReference>
<dbReference type="InterPro" id="IPR005880">
    <property type="entry name" value="Ribosomal_uL2_bac/org-type"/>
</dbReference>
<dbReference type="InterPro" id="IPR022669">
    <property type="entry name" value="Ribosomal_uL2_C"/>
</dbReference>
<dbReference type="InterPro" id="IPR022671">
    <property type="entry name" value="Ribosomal_uL2_CS"/>
</dbReference>
<dbReference type="InterPro" id="IPR014726">
    <property type="entry name" value="Ribosomal_uL2_dom3"/>
</dbReference>
<dbReference type="InterPro" id="IPR022666">
    <property type="entry name" value="Ribosomal_uL2_RNA-bd_dom"/>
</dbReference>
<dbReference type="InterPro" id="IPR008991">
    <property type="entry name" value="Translation_prot_SH3-like_sf"/>
</dbReference>
<dbReference type="NCBIfam" id="TIGR01171">
    <property type="entry name" value="rplB_bact"/>
    <property type="match status" value="1"/>
</dbReference>
<dbReference type="PANTHER" id="PTHR13691:SF5">
    <property type="entry name" value="LARGE RIBOSOMAL SUBUNIT PROTEIN UL2M"/>
    <property type="match status" value="1"/>
</dbReference>
<dbReference type="PANTHER" id="PTHR13691">
    <property type="entry name" value="RIBOSOMAL PROTEIN L2"/>
    <property type="match status" value="1"/>
</dbReference>
<dbReference type="Pfam" id="PF00181">
    <property type="entry name" value="Ribosomal_L2"/>
    <property type="match status" value="1"/>
</dbReference>
<dbReference type="Pfam" id="PF03947">
    <property type="entry name" value="Ribosomal_L2_C"/>
    <property type="match status" value="1"/>
</dbReference>
<dbReference type="PIRSF" id="PIRSF002158">
    <property type="entry name" value="Ribosomal_L2"/>
    <property type="match status" value="1"/>
</dbReference>
<dbReference type="SMART" id="SM01383">
    <property type="entry name" value="Ribosomal_L2"/>
    <property type="match status" value="1"/>
</dbReference>
<dbReference type="SMART" id="SM01382">
    <property type="entry name" value="Ribosomal_L2_C"/>
    <property type="match status" value="1"/>
</dbReference>
<dbReference type="SUPFAM" id="SSF50249">
    <property type="entry name" value="Nucleic acid-binding proteins"/>
    <property type="match status" value="1"/>
</dbReference>
<dbReference type="SUPFAM" id="SSF50104">
    <property type="entry name" value="Translation proteins SH3-like domain"/>
    <property type="match status" value="1"/>
</dbReference>
<dbReference type="PROSITE" id="PS00467">
    <property type="entry name" value="RIBOSOMAL_L2"/>
    <property type="match status" value="1"/>
</dbReference>